<proteinExistence type="inferred from homology"/>
<reference key="1">
    <citation type="submission" date="2007-06" db="EMBL/GenBank/DDBJ databases">
        <title>Complete sequence of Sinorhizobium medicae WSM419 chromosome.</title>
        <authorList>
            <consortium name="US DOE Joint Genome Institute"/>
            <person name="Copeland A."/>
            <person name="Lucas S."/>
            <person name="Lapidus A."/>
            <person name="Barry K."/>
            <person name="Glavina del Rio T."/>
            <person name="Dalin E."/>
            <person name="Tice H."/>
            <person name="Pitluck S."/>
            <person name="Chain P."/>
            <person name="Malfatti S."/>
            <person name="Shin M."/>
            <person name="Vergez L."/>
            <person name="Schmutz J."/>
            <person name="Larimer F."/>
            <person name="Land M."/>
            <person name="Hauser L."/>
            <person name="Kyrpides N."/>
            <person name="Mikhailova N."/>
            <person name="Reeve W.G."/>
            <person name="Richardson P."/>
        </authorList>
    </citation>
    <scope>NUCLEOTIDE SEQUENCE [LARGE SCALE GENOMIC DNA]</scope>
    <source>
        <strain>WSM419</strain>
    </source>
</reference>
<dbReference type="EMBL" id="CP000738">
    <property type="protein sequence ID" value="ABR62259.1"/>
    <property type="molecule type" value="Genomic_DNA"/>
</dbReference>
<dbReference type="RefSeq" id="WP_012067639.1">
    <property type="nucleotide sequence ID" value="NC_009636.1"/>
</dbReference>
<dbReference type="RefSeq" id="YP_001329094.1">
    <property type="nucleotide sequence ID" value="NC_009636.1"/>
</dbReference>
<dbReference type="SMR" id="A6UF29"/>
<dbReference type="STRING" id="366394.Smed_3441"/>
<dbReference type="GeneID" id="61610992"/>
<dbReference type="KEGG" id="smd:Smed_3441"/>
<dbReference type="PATRIC" id="fig|366394.8.peg.6691"/>
<dbReference type="eggNOG" id="COG0532">
    <property type="taxonomic scope" value="Bacteria"/>
</dbReference>
<dbReference type="HOGENOM" id="CLU_006301_10_2_5"/>
<dbReference type="OrthoDB" id="9811804at2"/>
<dbReference type="Proteomes" id="UP000001108">
    <property type="component" value="Chromosome"/>
</dbReference>
<dbReference type="GO" id="GO:0005829">
    <property type="term" value="C:cytosol"/>
    <property type="evidence" value="ECO:0007669"/>
    <property type="project" value="TreeGrafter"/>
</dbReference>
<dbReference type="GO" id="GO:0005525">
    <property type="term" value="F:GTP binding"/>
    <property type="evidence" value="ECO:0007669"/>
    <property type="project" value="UniProtKB-KW"/>
</dbReference>
<dbReference type="GO" id="GO:0003924">
    <property type="term" value="F:GTPase activity"/>
    <property type="evidence" value="ECO:0007669"/>
    <property type="project" value="UniProtKB-UniRule"/>
</dbReference>
<dbReference type="GO" id="GO:0097216">
    <property type="term" value="F:guanosine tetraphosphate binding"/>
    <property type="evidence" value="ECO:0007669"/>
    <property type="project" value="UniProtKB-ARBA"/>
</dbReference>
<dbReference type="GO" id="GO:0003743">
    <property type="term" value="F:translation initiation factor activity"/>
    <property type="evidence" value="ECO:0007669"/>
    <property type="project" value="UniProtKB-UniRule"/>
</dbReference>
<dbReference type="CDD" id="cd01887">
    <property type="entry name" value="IF2_eIF5B"/>
    <property type="match status" value="1"/>
</dbReference>
<dbReference type="CDD" id="cd03702">
    <property type="entry name" value="IF2_mtIF2_II"/>
    <property type="match status" value="1"/>
</dbReference>
<dbReference type="CDD" id="cd03692">
    <property type="entry name" value="mtIF2_IVc"/>
    <property type="match status" value="1"/>
</dbReference>
<dbReference type="FunFam" id="2.40.30.10:FF:000007">
    <property type="entry name" value="Translation initiation factor IF-2"/>
    <property type="match status" value="1"/>
</dbReference>
<dbReference type="FunFam" id="2.40.30.10:FF:000008">
    <property type="entry name" value="Translation initiation factor IF-2"/>
    <property type="match status" value="1"/>
</dbReference>
<dbReference type="FunFam" id="3.40.50.10050:FF:000001">
    <property type="entry name" value="Translation initiation factor IF-2"/>
    <property type="match status" value="1"/>
</dbReference>
<dbReference type="FunFam" id="3.40.50.300:FF:000019">
    <property type="entry name" value="Translation initiation factor IF-2"/>
    <property type="match status" value="1"/>
</dbReference>
<dbReference type="Gene3D" id="3.40.50.300">
    <property type="entry name" value="P-loop containing nucleotide triphosphate hydrolases"/>
    <property type="match status" value="1"/>
</dbReference>
<dbReference type="Gene3D" id="2.40.30.10">
    <property type="entry name" value="Translation factors"/>
    <property type="match status" value="2"/>
</dbReference>
<dbReference type="Gene3D" id="3.40.50.10050">
    <property type="entry name" value="Translation initiation factor IF- 2, domain 3"/>
    <property type="match status" value="1"/>
</dbReference>
<dbReference type="HAMAP" id="MF_00100_B">
    <property type="entry name" value="IF_2_B"/>
    <property type="match status" value="1"/>
</dbReference>
<dbReference type="InterPro" id="IPR053905">
    <property type="entry name" value="EF-G-like_DII"/>
</dbReference>
<dbReference type="InterPro" id="IPR004161">
    <property type="entry name" value="EFTu-like_2"/>
</dbReference>
<dbReference type="InterPro" id="IPR013575">
    <property type="entry name" value="IF2_assoc_dom_bac"/>
</dbReference>
<dbReference type="InterPro" id="IPR044145">
    <property type="entry name" value="IF2_II"/>
</dbReference>
<dbReference type="InterPro" id="IPR006847">
    <property type="entry name" value="IF2_N"/>
</dbReference>
<dbReference type="InterPro" id="IPR027417">
    <property type="entry name" value="P-loop_NTPase"/>
</dbReference>
<dbReference type="InterPro" id="IPR005225">
    <property type="entry name" value="Small_GTP-bd"/>
</dbReference>
<dbReference type="InterPro" id="IPR000795">
    <property type="entry name" value="T_Tr_GTP-bd_dom"/>
</dbReference>
<dbReference type="InterPro" id="IPR000178">
    <property type="entry name" value="TF_IF2_bacterial-like"/>
</dbReference>
<dbReference type="InterPro" id="IPR015760">
    <property type="entry name" value="TIF_IF2"/>
</dbReference>
<dbReference type="InterPro" id="IPR023115">
    <property type="entry name" value="TIF_IF2_dom3"/>
</dbReference>
<dbReference type="InterPro" id="IPR036925">
    <property type="entry name" value="TIF_IF2_dom3_sf"/>
</dbReference>
<dbReference type="InterPro" id="IPR009000">
    <property type="entry name" value="Transl_B-barrel_sf"/>
</dbReference>
<dbReference type="NCBIfam" id="TIGR00487">
    <property type="entry name" value="IF-2"/>
    <property type="match status" value="1"/>
</dbReference>
<dbReference type="NCBIfam" id="TIGR00231">
    <property type="entry name" value="small_GTP"/>
    <property type="match status" value="1"/>
</dbReference>
<dbReference type="PANTHER" id="PTHR43381:SF5">
    <property type="entry name" value="TR-TYPE G DOMAIN-CONTAINING PROTEIN"/>
    <property type="match status" value="1"/>
</dbReference>
<dbReference type="PANTHER" id="PTHR43381">
    <property type="entry name" value="TRANSLATION INITIATION FACTOR IF-2-RELATED"/>
    <property type="match status" value="1"/>
</dbReference>
<dbReference type="Pfam" id="PF22042">
    <property type="entry name" value="EF-G_D2"/>
    <property type="match status" value="1"/>
</dbReference>
<dbReference type="Pfam" id="PF00009">
    <property type="entry name" value="GTP_EFTU"/>
    <property type="match status" value="1"/>
</dbReference>
<dbReference type="Pfam" id="PF03144">
    <property type="entry name" value="GTP_EFTU_D2"/>
    <property type="match status" value="1"/>
</dbReference>
<dbReference type="Pfam" id="PF11987">
    <property type="entry name" value="IF-2"/>
    <property type="match status" value="1"/>
</dbReference>
<dbReference type="Pfam" id="PF08364">
    <property type="entry name" value="IF2_assoc"/>
    <property type="match status" value="1"/>
</dbReference>
<dbReference type="Pfam" id="PF04760">
    <property type="entry name" value="IF2_N"/>
    <property type="match status" value="1"/>
</dbReference>
<dbReference type="SUPFAM" id="SSF52156">
    <property type="entry name" value="Initiation factor IF2/eIF5b, domain 3"/>
    <property type="match status" value="1"/>
</dbReference>
<dbReference type="SUPFAM" id="SSF52540">
    <property type="entry name" value="P-loop containing nucleoside triphosphate hydrolases"/>
    <property type="match status" value="1"/>
</dbReference>
<dbReference type="SUPFAM" id="SSF50447">
    <property type="entry name" value="Translation proteins"/>
    <property type="match status" value="2"/>
</dbReference>
<dbReference type="PROSITE" id="PS51722">
    <property type="entry name" value="G_TR_2"/>
    <property type="match status" value="1"/>
</dbReference>
<dbReference type="PROSITE" id="PS01176">
    <property type="entry name" value="IF2"/>
    <property type="match status" value="1"/>
</dbReference>
<sequence>MTDNKDDKTISVAGKKTLTLKPSGVTQGTVRQDMGRGRTKAVVVETKRTRSPLKHKDERPITPVAAAPAAARPAEQRPMPPQPSGRPAPQPQPHQPRQEQNRPRGGVVLNDLSASEMEARRHALAAAQIRDAEEAKRRAEEEVRRRREEEERIAREKEEAARRAAEEAARPAVEAEKVEEKVEAATPAVAETRPLSERPAPAATPPAPAGVAPRGRRAGEDEEGERRHSSAGAPRGKVVRPEPAKPAPRAKGDEGRRQGKLTLTAAVDEDGSQRGRSLSAMRRRQEKFKRSQMQETREKISREVILPETITIQELSQRMSERAVDVIKFLMKEGQMMKPGDLIDADLAELIAGEFGHTVKRVSESDVEEGIFNISDADDEMHARPPIVTIMGHVDHGKTSLLDAIRHANVVAGEAGGITQHIGAYQVEQNGQKITFIDTPGHAAFTAMRARGAQATDIAILVVAADDSVMPQTIESINHAKAAGVPIIVAINKIDKPSADPQKVRTELLQHEVFVESMGGEVLDVEVSAKNQTNLDKLLEAILLQSEILDLKANPNRTAEGTVVEAELDRGRGAVATVLVQKGTLTPGQIIVAGDQWGRVRALVNDKGEHVKSAGPSTPVEVLGLSGTPAAGDRFAVVESESRAREISEYRQRLAREKAVARQSGSRGSLEQMMTQLQTSGVKEFPLVIKGDVQGSIEAISGALEKLGTDEVRARIVHSGAGGITESDVSLAEASNAAIIGFNVRANKQARDASERAGIEIRYYNIIYDLVDDVKAAMSGLLSPERRETFLGNAEILEVFNITKVGKVAGCRVTEGKVERGVGVRLVRDNVVIHEGKLKTLKRFKDEVSEVQSGQECGMAFENYEDIRAGDTIECFRVEHVTRTL</sequence>
<feature type="chain" id="PRO_1000008340" description="Translation initiation factor IF-2">
    <location>
        <begin position="1"/>
        <end position="885"/>
    </location>
</feature>
<feature type="domain" description="tr-type G">
    <location>
        <begin position="383"/>
        <end position="550"/>
    </location>
</feature>
<feature type="region of interest" description="Disordered" evidence="3">
    <location>
        <begin position="1"/>
        <end position="295"/>
    </location>
</feature>
<feature type="region of interest" description="G1" evidence="1">
    <location>
        <begin position="392"/>
        <end position="399"/>
    </location>
</feature>
<feature type="region of interest" description="G2" evidence="1">
    <location>
        <begin position="417"/>
        <end position="421"/>
    </location>
</feature>
<feature type="region of interest" description="G3" evidence="1">
    <location>
        <begin position="438"/>
        <end position="441"/>
    </location>
</feature>
<feature type="region of interest" description="G4" evidence="1">
    <location>
        <begin position="492"/>
        <end position="495"/>
    </location>
</feature>
<feature type="region of interest" description="G5" evidence="1">
    <location>
        <begin position="528"/>
        <end position="530"/>
    </location>
</feature>
<feature type="compositionally biased region" description="Low complexity" evidence="3">
    <location>
        <begin position="63"/>
        <end position="77"/>
    </location>
</feature>
<feature type="compositionally biased region" description="Pro residues" evidence="3">
    <location>
        <begin position="78"/>
        <end position="94"/>
    </location>
</feature>
<feature type="compositionally biased region" description="Basic and acidic residues" evidence="3">
    <location>
        <begin position="130"/>
        <end position="183"/>
    </location>
</feature>
<feature type="compositionally biased region" description="Low complexity" evidence="3">
    <location>
        <begin position="184"/>
        <end position="201"/>
    </location>
</feature>
<feature type="binding site" evidence="2">
    <location>
        <begin position="392"/>
        <end position="399"/>
    </location>
    <ligand>
        <name>GTP</name>
        <dbReference type="ChEBI" id="CHEBI:37565"/>
    </ligand>
</feature>
<feature type="binding site" evidence="2">
    <location>
        <begin position="438"/>
        <end position="442"/>
    </location>
    <ligand>
        <name>GTP</name>
        <dbReference type="ChEBI" id="CHEBI:37565"/>
    </ligand>
</feature>
<feature type="binding site" evidence="2">
    <location>
        <begin position="492"/>
        <end position="495"/>
    </location>
    <ligand>
        <name>GTP</name>
        <dbReference type="ChEBI" id="CHEBI:37565"/>
    </ligand>
</feature>
<keyword id="KW-0963">Cytoplasm</keyword>
<keyword id="KW-0342">GTP-binding</keyword>
<keyword id="KW-0396">Initiation factor</keyword>
<keyword id="KW-0547">Nucleotide-binding</keyword>
<keyword id="KW-0648">Protein biosynthesis</keyword>
<organism>
    <name type="scientific">Sinorhizobium medicae (strain WSM419)</name>
    <name type="common">Ensifer medicae</name>
    <dbReference type="NCBI Taxonomy" id="366394"/>
    <lineage>
        <taxon>Bacteria</taxon>
        <taxon>Pseudomonadati</taxon>
        <taxon>Pseudomonadota</taxon>
        <taxon>Alphaproteobacteria</taxon>
        <taxon>Hyphomicrobiales</taxon>
        <taxon>Rhizobiaceae</taxon>
        <taxon>Sinorhizobium/Ensifer group</taxon>
        <taxon>Sinorhizobium</taxon>
    </lineage>
</organism>
<evidence type="ECO:0000250" key="1"/>
<evidence type="ECO:0000255" key="2">
    <source>
        <dbReference type="HAMAP-Rule" id="MF_00100"/>
    </source>
</evidence>
<evidence type="ECO:0000256" key="3">
    <source>
        <dbReference type="SAM" id="MobiDB-lite"/>
    </source>
</evidence>
<protein>
    <recommendedName>
        <fullName evidence="2">Translation initiation factor IF-2</fullName>
    </recommendedName>
</protein>
<gene>
    <name evidence="2" type="primary">infB</name>
    <name type="ordered locus">Smed_3441</name>
</gene>
<comment type="function">
    <text evidence="2">One of the essential components for the initiation of protein synthesis. Protects formylmethionyl-tRNA from spontaneous hydrolysis and promotes its binding to the 30S ribosomal subunits. Also involved in the hydrolysis of GTP during the formation of the 70S ribosomal complex.</text>
</comment>
<comment type="subcellular location">
    <subcellularLocation>
        <location evidence="2">Cytoplasm</location>
    </subcellularLocation>
</comment>
<comment type="similarity">
    <text evidence="2">Belongs to the TRAFAC class translation factor GTPase superfamily. Classic translation factor GTPase family. IF-2 subfamily.</text>
</comment>
<accession>A6UF29</accession>
<name>IF2_SINMW</name>